<sequence>MQPTLFIDRDGTLIDEPKTDFQIDSLEKLKLEPKVIPALLRLKAKYRFVIVSNQDGLGTDAFPQTNFDKPHNVMMALFESQGITFDEVLICPHKPEENCLCRKPKIKLLDHYIRKNLFDIDRSFVIGDRETDVQLAENLGIRAIQYDPQKMNWDLIAEKLLGETVTNCGKRPPRFAEVIRQTKETDIKVQIWLDEAGVNEIKTGVGFFDHMLDQIATHGGFRMNVQCKGDLWIDEHHTVEDTALALGQALKQAIGDKRGIARFGFVLPMDECKAECALDLSGRPWIKFNACFKRDKVGDFSTELTEHFFQSLAFSMLATIHLNVTGNNDHHKIESLFKAFGRTLRQAIRIEGNEMPSSKGVL</sequence>
<dbReference type="EC" id="3.1.3.15" evidence="1"/>
<dbReference type="EC" id="4.2.1.19" evidence="1"/>
<dbReference type="EMBL" id="CP000057">
    <property type="protein sequence ID" value="AAX87525.1"/>
    <property type="molecule type" value="Genomic_DNA"/>
</dbReference>
<dbReference type="RefSeq" id="WP_011272078.1">
    <property type="nucleotide sequence ID" value="NC_007146.2"/>
</dbReference>
<dbReference type="SMR" id="Q4QN72"/>
<dbReference type="GeneID" id="93219485"/>
<dbReference type="KEGG" id="hit:NTHI0602"/>
<dbReference type="HOGENOM" id="CLU_044308_0_0_6"/>
<dbReference type="UniPathway" id="UPA00031">
    <property type="reaction ID" value="UER00011"/>
</dbReference>
<dbReference type="UniPathway" id="UPA00031">
    <property type="reaction ID" value="UER00013"/>
</dbReference>
<dbReference type="Proteomes" id="UP000002525">
    <property type="component" value="Chromosome"/>
</dbReference>
<dbReference type="GO" id="GO:0005737">
    <property type="term" value="C:cytoplasm"/>
    <property type="evidence" value="ECO:0007669"/>
    <property type="project" value="UniProtKB-SubCell"/>
</dbReference>
<dbReference type="GO" id="GO:0004401">
    <property type="term" value="F:histidinol-phosphatase activity"/>
    <property type="evidence" value="ECO:0007669"/>
    <property type="project" value="UniProtKB-UniRule"/>
</dbReference>
<dbReference type="GO" id="GO:0004424">
    <property type="term" value="F:imidazoleglycerol-phosphate dehydratase activity"/>
    <property type="evidence" value="ECO:0007669"/>
    <property type="project" value="UniProtKB-UniRule"/>
</dbReference>
<dbReference type="GO" id="GO:0046872">
    <property type="term" value="F:metal ion binding"/>
    <property type="evidence" value="ECO:0007669"/>
    <property type="project" value="UniProtKB-KW"/>
</dbReference>
<dbReference type="GO" id="GO:0000105">
    <property type="term" value="P:L-histidine biosynthetic process"/>
    <property type="evidence" value="ECO:0007669"/>
    <property type="project" value="UniProtKB-UniRule"/>
</dbReference>
<dbReference type="CDD" id="cd07503">
    <property type="entry name" value="HAD_HisB-N"/>
    <property type="match status" value="1"/>
</dbReference>
<dbReference type="CDD" id="cd07914">
    <property type="entry name" value="IGPD"/>
    <property type="match status" value="1"/>
</dbReference>
<dbReference type="FunFam" id="3.40.50.1000:FF:000061">
    <property type="entry name" value="Histidine biosynthesis bifunctional protein HisB"/>
    <property type="match status" value="1"/>
</dbReference>
<dbReference type="FunFam" id="3.30.230.40:FF:000001">
    <property type="entry name" value="Imidazoleglycerol-phosphate dehydratase HisB"/>
    <property type="match status" value="1"/>
</dbReference>
<dbReference type="FunFam" id="3.30.230.40:FF:000003">
    <property type="entry name" value="Imidazoleglycerol-phosphate dehydratase HisB"/>
    <property type="match status" value="1"/>
</dbReference>
<dbReference type="Gene3D" id="3.40.50.1000">
    <property type="entry name" value="HAD superfamily/HAD-like"/>
    <property type="match status" value="1"/>
</dbReference>
<dbReference type="Gene3D" id="3.30.230.40">
    <property type="entry name" value="Imidazole glycerol phosphate dehydratase, domain 1"/>
    <property type="match status" value="2"/>
</dbReference>
<dbReference type="HAMAP" id="MF_01022">
    <property type="entry name" value="Bifunc_HisB"/>
    <property type="match status" value="1"/>
</dbReference>
<dbReference type="HAMAP" id="MF_00076">
    <property type="entry name" value="HisB"/>
    <property type="match status" value="1"/>
</dbReference>
<dbReference type="InterPro" id="IPR036412">
    <property type="entry name" value="HAD-like_sf"/>
</dbReference>
<dbReference type="InterPro" id="IPR006549">
    <property type="entry name" value="HAD-SF_hydro_IIIA"/>
</dbReference>
<dbReference type="InterPro" id="IPR023214">
    <property type="entry name" value="HAD_sf"/>
</dbReference>
<dbReference type="InterPro" id="IPR020566">
    <property type="entry name" value="His_synth_bifunc_HisB"/>
</dbReference>
<dbReference type="InterPro" id="IPR005954">
    <property type="entry name" value="HisB_N"/>
</dbReference>
<dbReference type="InterPro" id="IPR006543">
    <property type="entry name" value="Histidinol-phos"/>
</dbReference>
<dbReference type="InterPro" id="IPR038494">
    <property type="entry name" value="IGPD_sf"/>
</dbReference>
<dbReference type="InterPro" id="IPR000807">
    <property type="entry name" value="ImidazoleglycerolP_deHydtase"/>
</dbReference>
<dbReference type="InterPro" id="IPR020565">
    <property type="entry name" value="ImidazoleglycerP_deHydtase_CS"/>
</dbReference>
<dbReference type="InterPro" id="IPR020568">
    <property type="entry name" value="Ribosomal_Su5_D2-typ_SF"/>
</dbReference>
<dbReference type="NCBIfam" id="TIGR01662">
    <property type="entry name" value="HAD-SF-IIIA"/>
    <property type="match status" value="1"/>
</dbReference>
<dbReference type="NCBIfam" id="TIGR01261">
    <property type="entry name" value="hisB_Nterm"/>
    <property type="match status" value="1"/>
</dbReference>
<dbReference type="NCBIfam" id="TIGR01656">
    <property type="entry name" value="Histidinol-ppas"/>
    <property type="match status" value="1"/>
</dbReference>
<dbReference type="NCBIfam" id="NF002111">
    <property type="entry name" value="PRK00951.2-1"/>
    <property type="match status" value="1"/>
</dbReference>
<dbReference type="NCBIfam" id="NF002114">
    <property type="entry name" value="PRK00951.2-4"/>
    <property type="match status" value="1"/>
</dbReference>
<dbReference type="NCBIfam" id="NF003937">
    <property type="entry name" value="PRK05446.1"/>
    <property type="match status" value="1"/>
</dbReference>
<dbReference type="PANTHER" id="PTHR23133:SF2">
    <property type="entry name" value="IMIDAZOLEGLYCEROL-PHOSPHATE DEHYDRATASE"/>
    <property type="match status" value="1"/>
</dbReference>
<dbReference type="PANTHER" id="PTHR23133">
    <property type="entry name" value="IMIDAZOLEGLYCEROL-PHOSPHATE DEHYDRATASE HIS7"/>
    <property type="match status" value="1"/>
</dbReference>
<dbReference type="Pfam" id="PF13242">
    <property type="entry name" value="Hydrolase_like"/>
    <property type="match status" value="1"/>
</dbReference>
<dbReference type="Pfam" id="PF00475">
    <property type="entry name" value="IGPD"/>
    <property type="match status" value="1"/>
</dbReference>
<dbReference type="SUPFAM" id="SSF56784">
    <property type="entry name" value="HAD-like"/>
    <property type="match status" value="1"/>
</dbReference>
<dbReference type="SUPFAM" id="SSF54211">
    <property type="entry name" value="Ribosomal protein S5 domain 2-like"/>
    <property type="match status" value="2"/>
</dbReference>
<dbReference type="PROSITE" id="PS00954">
    <property type="entry name" value="IGP_DEHYDRATASE_1"/>
    <property type="match status" value="1"/>
</dbReference>
<dbReference type="PROSITE" id="PS00955">
    <property type="entry name" value="IGP_DEHYDRATASE_2"/>
    <property type="match status" value="1"/>
</dbReference>
<organism>
    <name type="scientific">Haemophilus influenzae (strain 86-028NP)</name>
    <dbReference type="NCBI Taxonomy" id="281310"/>
    <lineage>
        <taxon>Bacteria</taxon>
        <taxon>Pseudomonadati</taxon>
        <taxon>Pseudomonadota</taxon>
        <taxon>Gammaproteobacteria</taxon>
        <taxon>Pasteurellales</taxon>
        <taxon>Pasteurellaceae</taxon>
        <taxon>Haemophilus</taxon>
    </lineage>
</organism>
<accession>Q4QN72</accession>
<proteinExistence type="inferred from homology"/>
<gene>
    <name evidence="1" type="primary">hisB</name>
    <name type="ordered locus">NTHI0602</name>
</gene>
<protein>
    <recommendedName>
        <fullName evidence="1">Histidine biosynthesis bifunctional protein HisB</fullName>
    </recommendedName>
    <domain>
        <recommendedName>
            <fullName evidence="1">Histidinol-phosphatase</fullName>
            <ecNumber evidence="1">3.1.3.15</ecNumber>
        </recommendedName>
    </domain>
    <domain>
        <recommendedName>
            <fullName evidence="1">Imidazoleglycerol-phosphate dehydratase</fullName>
            <shortName evidence="1">IGPD</shortName>
            <ecNumber evidence="1">4.2.1.19</ecNumber>
        </recommendedName>
    </domain>
</protein>
<evidence type="ECO:0000255" key="1">
    <source>
        <dbReference type="HAMAP-Rule" id="MF_01022"/>
    </source>
</evidence>
<keyword id="KW-0028">Amino-acid biosynthesis</keyword>
<keyword id="KW-0963">Cytoplasm</keyword>
<keyword id="KW-0368">Histidine biosynthesis</keyword>
<keyword id="KW-0378">Hydrolase</keyword>
<keyword id="KW-0456">Lyase</keyword>
<keyword id="KW-0460">Magnesium</keyword>
<keyword id="KW-0479">Metal-binding</keyword>
<keyword id="KW-0511">Multifunctional enzyme</keyword>
<keyword id="KW-0862">Zinc</keyword>
<name>HIS7_HAEI8</name>
<reference key="1">
    <citation type="journal article" date="2005" name="J. Bacteriol.">
        <title>Genomic sequence of an otitis media isolate of nontypeable Haemophilus influenzae: comparative study with H. influenzae serotype d, strain KW20.</title>
        <authorList>
            <person name="Harrison A."/>
            <person name="Dyer D.W."/>
            <person name="Gillaspy A."/>
            <person name="Ray W.C."/>
            <person name="Mungur R."/>
            <person name="Carson M.B."/>
            <person name="Zhong H."/>
            <person name="Gipson J."/>
            <person name="Gipson M."/>
            <person name="Johnson L.S."/>
            <person name="Lewis L."/>
            <person name="Bakaletz L.O."/>
            <person name="Munson R.S. Jr."/>
        </authorList>
    </citation>
    <scope>NUCLEOTIDE SEQUENCE [LARGE SCALE GENOMIC DNA]</scope>
    <source>
        <strain>86-028NP</strain>
    </source>
</reference>
<comment type="catalytic activity">
    <reaction evidence="1">
        <text>D-erythro-1-(imidazol-4-yl)glycerol 3-phosphate = 3-(imidazol-4-yl)-2-oxopropyl phosphate + H2O</text>
        <dbReference type="Rhea" id="RHEA:11040"/>
        <dbReference type="ChEBI" id="CHEBI:15377"/>
        <dbReference type="ChEBI" id="CHEBI:57766"/>
        <dbReference type="ChEBI" id="CHEBI:58278"/>
        <dbReference type="EC" id="4.2.1.19"/>
    </reaction>
</comment>
<comment type="catalytic activity">
    <reaction evidence="1">
        <text>L-histidinol phosphate + H2O = L-histidinol + phosphate</text>
        <dbReference type="Rhea" id="RHEA:14465"/>
        <dbReference type="ChEBI" id="CHEBI:15377"/>
        <dbReference type="ChEBI" id="CHEBI:43474"/>
        <dbReference type="ChEBI" id="CHEBI:57699"/>
        <dbReference type="ChEBI" id="CHEBI:57980"/>
        <dbReference type="EC" id="3.1.3.15"/>
    </reaction>
</comment>
<comment type="cofactor">
    <cofactor evidence="1">
        <name>Mg(2+)</name>
        <dbReference type="ChEBI" id="CHEBI:18420"/>
    </cofactor>
</comment>
<comment type="cofactor">
    <cofactor evidence="1">
        <name>Zn(2+)</name>
        <dbReference type="ChEBI" id="CHEBI:29105"/>
    </cofactor>
</comment>
<comment type="pathway">
    <text evidence="1">Amino-acid biosynthesis; L-histidine biosynthesis; L-histidine from 5-phospho-alpha-D-ribose 1-diphosphate: step 6/9.</text>
</comment>
<comment type="pathway">
    <text evidence="1">Amino-acid biosynthesis; L-histidine biosynthesis; L-histidine from 5-phospho-alpha-D-ribose 1-diphosphate: step 8/9.</text>
</comment>
<comment type="subcellular location">
    <subcellularLocation>
        <location evidence="1">Cytoplasm</location>
    </subcellularLocation>
</comment>
<comment type="similarity">
    <text evidence="1">In the N-terminal section; belongs to the histidinol-phosphatase family.</text>
</comment>
<comment type="similarity">
    <text evidence="1">In the C-terminal section; belongs to the imidazoleglycerol-phosphate dehydratase family.</text>
</comment>
<feature type="chain" id="PRO_1000063445" description="Histidine biosynthesis bifunctional protein HisB">
    <location>
        <begin position="1"/>
        <end position="362"/>
    </location>
</feature>
<feature type="region of interest" description="Histidinol-phosphatase" evidence="1">
    <location>
        <begin position="1"/>
        <end position="173"/>
    </location>
</feature>
<feature type="region of interest" description="Imidazoleglycerol-phosphate dehydratase" evidence="1">
    <location>
        <begin position="174"/>
        <end position="362"/>
    </location>
</feature>
<feature type="active site" description="Nucleophile" evidence="1">
    <location>
        <position position="8"/>
    </location>
</feature>
<feature type="active site" description="Proton donor" evidence="1">
    <location>
        <position position="10"/>
    </location>
</feature>
<feature type="binding site" evidence="1">
    <location>
        <position position="8"/>
    </location>
    <ligand>
        <name>Mg(2+)</name>
        <dbReference type="ChEBI" id="CHEBI:18420"/>
    </ligand>
</feature>
<feature type="binding site" evidence="1">
    <location>
        <position position="10"/>
    </location>
    <ligand>
        <name>Mg(2+)</name>
        <dbReference type="ChEBI" id="CHEBI:18420"/>
    </ligand>
</feature>
<feature type="binding site" evidence="1">
    <location>
        <position position="91"/>
    </location>
    <ligand>
        <name>Zn(2+)</name>
        <dbReference type="ChEBI" id="CHEBI:29105"/>
    </ligand>
</feature>
<feature type="binding site" evidence="1">
    <location>
        <position position="93"/>
    </location>
    <ligand>
        <name>Zn(2+)</name>
        <dbReference type="ChEBI" id="CHEBI:29105"/>
    </ligand>
</feature>
<feature type="binding site" evidence="1">
    <location>
        <position position="99"/>
    </location>
    <ligand>
        <name>Zn(2+)</name>
        <dbReference type="ChEBI" id="CHEBI:29105"/>
    </ligand>
</feature>
<feature type="binding site" evidence="1">
    <location>
        <position position="101"/>
    </location>
    <ligand>
        <name>Zn(2+)</name>
        <dbReference type="ChEBI" id="CHEBI:29105"/>
    </ligand>
</feature>
<feature type="binding site" evidence="1">
    <location>
        <position position="128"/>
    </location>
    <ligand>
        <name>Mg(2+)</name>
        <dbReference type="ChEBI" id="CHEBI:18420"/>
    </ligand>
</feature>